<sequence>MASYQSINFRREAILSGRPYPYYYPYVSQIPCISNSCEDHRIQADPNIIYSYEGTQAFDWSNGQCHDPTHNRSTCISNVYYPTNPIFDYCYYGETPFQDPSYQLGFIVREIVVNIIDVPDLRDPVEYMETMAPIGNSESLQINFVLNNQNKLSENNQSNPQINSQINPQMNPRINSQINTQRDNLQPEIYTNNDEPTLSAPVKSVLYKDPIDRIRKVTNCPQVTQDPGLIEPRNLIIVCDTIWVCTPGFLRAYNLLGVPTGRKIGTFGIGGNNVYPSSIAYNDNQCLFPIQKGSKCASSTMIIATLDGTINAYNPIINPENSILVIDNSSRQAMYTGVAICGCRVYLTDFYNQQIDVYDDKFILLPEFSFVGDDECDPIPEYFSPYNIVNICDQLYVTFVQQDPYNNTLEFDGTGLGYINIYTPDGIFIRRFASGCVLNVPYGLIEAPSCYGYPSGSILVANYGSGNINVFDIHGKWISNLKDGFGTDLYIEGLRGITHASCCPKTVYWTSCVNHKINKLGTINTSTNNC</sequence>
<accession>Q5UR92</accession>
<evidence type="ECO:0000305" key="1"/>
<gene>
    <name type="ordered locus">MIMI_R640</name>
</gene>
<feature type="chain" id="PRO_0000071301" description="Uncharacterized protein R640">
    <location>
        <begin position="1"/>
        <end position="530"/>
    </location>
</feature>
<reference key="1">
    <citation type="journal article" date="2004" name="Science">
        <title>The 1.2-megabase genome sequence of Mimivirus.</title>
        <authorList>
            <person name="Raoult D."/>
            <person name="Audic S."/>
            <person name="Robert C."/>
            <person name="Abergel C."/>
            <person name="Renesto P."/>
            <person name="Ogata H."/>
            <person name="La Scola B."/>
            <person name="Susan M."/>
            <person name="Claverie J.-M."/>
        </authorList>
    </citation>
    <scope>NUCLEOTIDE SEQUENCE [LARGE SCALE GENOMIC DNA]</scope>
    <source>
        <strain>Rowbotham-Bradford</strain>
    </source>
</reference>
<protein>
    <recommendedName>
        <fullName>Uncharacterized protein R640</fullName>
    </recommendedName>
</protein>
<keyword id="KW-1185">Reference proteome</keyword>
<comment type="similarity">
    <text evidence="1">Belongs to the mimivirus R640 family.</text>
</comment>
<proteinExistence type="inferred from homology"/>
<dbReference type="EMBL" id="AY653733">
    <property type="protein sequence ID" value="AAV50901.1"/>
    <property type="molecule type" value="Genomic_DNA"/>
</dbReference>
<dbReference type="KEGG" id="vg:9925284"/>
<dbReference type="OrthoDB" id="11411at10239"/>
<dbReference type="Proteomes" id="UP000001134">
    <property type="component" value="Genome"/>
</dbReference>
<dbReference type="Gene3D" id="2.120.10.30">
    <property type="entry name" value="TolB, C-terminal domain"/>
    <property type="match status" value="1"/>
</dbReference>
<dbReference type="InterPro" id="IPR011042">
    <property type="entry name" value="6-blade_b-propeller_TolB-like"/>
</dbReference>
<dbReference type="InterPro" id="IPR017549">
    <property type="entry name" value="APMV_L690"/>
</dbReference>
<dbReference type="NCBIfam" id="TIGR03118">
    <property type="entry name" value="PEPCTERM_chp_1"/>
    <property type="match status" value="1"/>
</dbReference>
<dbReference type="SUPFAM" id="SSF101898">
    <property type="entry name" value="NHL repeat"/>
    <property type="match status" value="1"/>
</dbReference>
<organismHost>
    <name type="scientific">Acanthamoeba polyphaga</name>
    <name type="common">Amoeba</name>
    <dbReference type="NCBI Taxonomy" id="5757"/>
</organismHost>
<organism>
    <name type="scientific">Acanthamoeba polyphaga mimivirus</name>
    <name type="common">APMV</name>
    <dbReference type="NCBI Taxonomy" id="212035"/>
    <lineage>
        <taxon>Viruses</taxon>
        <taxon>Varidnaviria</taxon>
        <taxon>Bamfordvirae</taxon>
        <taxon>Nucleocytoviricota</taxon>
        <taxon>Megaviricetes</taxon>
        <taxon>Imitervirales</taxon>
        <taxon>Mimiviridae</taxon>
        <taxon>Megamimivirinae</taxon>
        <taxon>Mimivirus</taxon>
        <taxon>Mimivirus bradfordmassiliense</taxon>
    </lineage>
</organism>
<name>YR640_MIMIV</name>